<protein>
    <recommendedName>
        <fullName evidence="1">Large ribosomal subunit protein uL4</fullName>
    </recommendedName>
    <alternativeName>
        <fullName evidence="3">50S ribosomal protein L4</fullName>
    </alternativeName>
</protein>
<feature type="chain" id="PRO_1000142127" description="Large ribosomal subunit protein uL4">
    <location>
        <begin position="1"/>
        <end position="207"/>
    </location>
</feature>
<feature type="region of interest" description="Disordered" evidence="2">
    <location>
        <begin position="43"/>
        <end position="85"/>
    </location>
</feature>
<feature type="compositionally biased region" description="Basic and acidic residues" evidence="2">
    <location>
        <begin position="47"/>
        <end position="59"/>
    </location>
</feature>
<feature type="compositionally biased region" description="Basic residues" evidence="2">
    <location>
        <begin position="60"/>
        <end position="71"/>
    </location>
</feature>
<reference key="1">
    <citation type="submission" date="2008-04" db="EMBL/GenBank/DDBJ databases">
        <title>Complete sequence of chromosome of Exiguobacterium sibiricum 255-15.</title>
        <authorList>
            <consortium name="US DOE Joint Genome Institute"/>
            <person name="Copeland A."/>
            <person name="Lucas S."/>
            <person name="Lapidus A."/>
            <person name="Glavina del Rio T."/>
            <person name="Dalin E."/>
            <person name="Tice H."/>
            <person name="Bruce D."/>
            <person name="Goodwin L."/>
            <person name="Pitluck S."/>
            <person name="Kiss H."/>
            <person name="Chertkov O."/>
            <person name="Monk C."/>
            <person name="Brettin T."/>
            <person name="Detter J.C."/>
            <person name="Han C."/>
            <person name="Kuske C.R."/>
            <person name="Schmutz J."/>
            <person name="Larimer F."/>
            <person name="Land M."/>
            <person name="Hauser L."/>
            <person name="Kyrpides N."/>
            <person name="Mikhailova N."/>
            <person name="Vishnivetskaya T."/>
            <person name="Rodrigues D.F."/>
            <person name="Gilichinsky D."/>
            <person name="Tiedje J."/>
            <person name="Richardson P."/>
        </authorList>
    </citation>
    <scope>NUCLEOTIDE SEQUENCE [LARGE SCALE GENOMIC DNA]</scope>
    <source>
        <strain>DSM 17290 / CCUG 55495 / CIP 109462 / JCM 13490 / 255-15</strain>
    </source>
</reference>
<dbReference type="EMBL" id="CP001022">
    <property type="protein sequence ID" value="ACB59584.1"/>
    <property type="molecule type" value="Genomic_DNA"/>
</dbReference>
<dbReference type="RefSeq" id="WP_012369010.1">
    <property type="nucleotide sequence ID" value="NC_010556.1"/>
</dbReference>
<dbReference type="SMR" id="B1YGV1"/>
<dbReference type="STRING" id="262543.Exig_0097"/>
<dbReference type="KEGG" id="esi:Exig_0097"/>
<dbReference type="eggNOG" id="COG0088">
    <property type="taxonomic scope" value="Bacteria"/>
</dbReference>
<dbReference type="HOGENOM" id="CLU_041575_5_2_9"/>
<dbReference type="OrthoDB" id="9803201at2"/>
<dbReference type="Proteomes" id="UP000001681">
    <property type="component" value="Chromosome"/>
</dbReference>
<dbReference type="GO" id="GO:1990904">
    <property type="term" value="C:ribonucleoprotein complex"/>
    <property type="evidence" value="ECO:0007669"/>
    <property type="project" value="UniProtKB-KW"/>
</dbReference>
<dbReference type="GO" id="GO:0005840">
    <property type="term" value="C:ribosome"/>
    <property type="evidence" value="ECO:0007669"/>
    <property type="project" value="UniProtKB-KW"/>
</dbReference>
<dbReference type="GO" id="GO:0019843">
    <property type="term" value="F:rRNA binding"/>
    <property type="evidence" value="ECO:0007669"/>
    <property type="project" value="UniProtKB-UniRule"/>
</dbReference>
<dbReference type="GO" id="GO:0003735">
    <property type="term" value="F:structural constituent of ribosome"/>
    <property type="evidence" value="ECO:0007669"/>
    <property type="project" value="InterPro"/>
</dbReference>
<dbReference type="GO" id="GO:0006412">
    <property type="term" value="P:translation"/>
    <property type="evidence" value="ECO:0007669"/>
    <property type="project" value="UniProtKB-UniRule"/>
</dbReference>
<dbReference type="FunFam" id="3.40.1370.10:FF:000003">
    <property type="entry name" value="50S ribosomal protein L4"/>
    <property type="match status" value="1"/>
</dbReference>
<dbReference type="Gene3D" id="3.40.1370.10">
    <property type="match status" value="1"/>
</dbReference>
<dbReference type="HAMAP" id="MF_01328_B">
    <property type="entry name" value="Ribosomal_uL4_B"/>
    <property type="match status" value="1"/>
</dbReference>
<dbReference type="InterPro" id="IPR002136">
    <property type="entry name" value="Ribosomal_uL4"/>
</dbReference>
<dbReference type="InterPro" id="IPR013005">
    <property type="entry name" value="Ribosomal_uL4-like"/>
</dbReference>
<dbReference type="InterPro" id="IPR023574">
    <property type="entry name" value="Ribosomal_uL4_dom_sf"/>
</dbReference>
<dbReference type="NCBIfam" id="TIGR03953">
    <property type="entry name" value="rplD_bact"/>
    <property type="match status" value="1"/>
</dbReference>
<dbReference type="PANTHER" id="PTHR10746">
    <property type="entry name" value="50S RIBOSOMAL PROTEIN L4"/>
    <property type="match status" value="1"/>
</dbReference>
<dbReference type="PANTHER" id="PTHR10746:SF6">
    <property type="entry name" value="LARGE RIBOSOMAL SUBUNIT PROTEIN UL4M"/>
    <property type="match status" value="1"/>
</dbReference>
<dbReference type="Pfam" id="PF00573">
    <property type="entry name" value="Ribosomal_L4"/>
    <property type="match status" value="1"/>
</dbReference>
<dbReference type="SUPFAM" id="SSF52166">
    <property type="entry name" value="Ribosomal protein L4"/>
    <property type="match status" value="1"/>
</dbReference>
<gene>
    <name evidence="1" type="primary">rplD</name>
    <name type="ordered locus">Exig_0097</name>
</gene>
<keyword id="KW-1185">Reference proteome</keyword>
<keyword id="KW-0687">Ribonucleoprotein</keyword>
<keyword id="KW-0689">Ribosomal protein</keyword>
<keyword id="KW-0694">RNA-binding</keyword>
<keyword id="KW-0699">rRNA-binding</keyword>
<sequence length="207" mass="22337">MPKVALLNQTGTQVGDIELADAVFGIEPNEAVVYDAIVMQQASRRQGTHDTKGRSEVRGGGRKPWKQKGTGRARQGSIRSPQWVGGGTVFGPTPRSYAYKLPKKVRRLALRSALSSKVANNEFIVLEGLTIDAPKTKDMISVFAALSIERKVLVVTADYNETVVLSTRNIPGVTVVDAAGVNVLDLVAHDKVIFTKDAVARVEEVLA</sequence>
<evidence type="ECO:0000255" key="1">
    <source>
        <dbReference type="HAMAP-Rule" id="MF_01328"/>
    </source>
</evidence>
<evidence type="ECO:0000256" key="2">
    <source>
        <dbReference type="SAM" id="MobiDB-lite"/>
    </source>
</evidence>
<evidence type="ECO:0000305" key="3"/>
<accession>B1YGV1</accession>
<name>RL4_EXIS2</name>
<proteinExistence type="inferred from homology"/>
<comment type="function">
    <text evidence="1">One of the primary rRNA binding proteins, this protein initially binds near the 5'-end of the 23S rRNA. It is important during the early stages of 50S assembly. It makes multiple contacts with different domains of the 23S rRNA in the assembled 50S subunit and ribosome.</text>
</comment>
<comment type="function">
    <text evidence="1">Forms part of the polypeptide exit tunnel.</text>
</comment>
<comment type="subunit">
    <text evidence="1">Part of the 50S ribosomal subunit.</text>
</comment>
<comment type="similarity">
    <text evidence="1">Belongs to the universal ribosomal protein uL4 family.</text>
</comment>
<organism>
    <name type="scientific">Exiguobacterium sibiricum (strain DSM 17290 / CCUG 55495 / CIP 109462 / JCM 13490 / 255-15)</name>
    <dbReference type="NCBI Taxonomy" id="262543"/>
    <lineage>
        <taxon>Bacteria</taxon>
        <taxon>Bacillati</taxon>
        <taxon>Bacillota</taxon>
        <taxon>Bacilli</taxon>
        <taxon>Bacillales</taxon>
        <taxon>Bacillales Family XII. Incertae Sedis</taxon>
        <taxon>Exiguobacterium</taxon>
    </lineage>
</organism>